<name>PYRG_ANASK</name>
<comment type="function">
    <text evidence="1">Catalyzes the ATP-dependent amination of UTP to CTP with either L-glutamine or ammonia as the source of nitrogen. Regulates intracellular CTP levels through interactions with the four ribonucleotide triphosphates.</text>
</comment>
<comment type="catalytic activity">
    <reaction evidence="1">
        <text>UTP + L-glutamine + ATP + H2O = CTP + L-glutamate + ADP + phosphate + 2 H(+)</text>
        <dbReference type="Rhea" id="RHEA:26426"/>
        <dbReference type="ChEBI" id="CHEBI:15377"/>
        <dbReference type="ChEBI" id="CHEBI:15378"/>
        <dbReference type="ChEBI" id="CHEBI:29985"/>
        <dbReference type="ChEBI" id="CHEBI:30616"/>
        <dbReference type="ChEBI" id="CHEBI:37563"/>
        <dbReference type="ChEBI" id="CHEBI:43474"/>
        <dbReference type="ChEBI" id="CHEBI:46398"/>
        <dbReference type="ChEBI" id="CHEBI:58359"/>
        <dbReference type="ChEBI" id="CHEBI:456216"/>
        <dbReference type="EC" id="6.3.4.2"/>
    </reaction>
</comment>
<comment type="catalytic activity">
    <reaction evidence="1">
        <text>L-glutamine + H2O = L-glutamate + NH4(+)</text>
        <dbReference type="Rhea" id="RHEA:15889"/>
        <dbReference type="ChEBI" id="CHEBI:15377"/>
        <dbReference type="ChEBI" id="CHEBI:28938"/>
        <dbReference type="ChEBI" id="CHEBI:29985"/>
        <dbReference type="ChEBI" id="CHEBI:58359"/>
    </reaction>
</comment>
<comment type="catalytic activity">
    <reaction evidence="1">
        <text>UTP + NH4(+) + ATP = CTP + ADP + phosphate + 2 H(+)</text>
        <dbReference type="Rhea" id="RHEA:16597"/>
        <dbReference type="ChEBI" id="CHEBI:15378"/>
        <dbReference type="ChEBI" id="CHEBI:28938"/>
        <dbReference type="ChEBI" id="CHEBI:30616"/>
        <dbReference type="ChEBI" id="CHEBI:37563"/>
        <dbReference type="ChEBI" id="CHEBI:43474"/>
        <dbReference type="ChEBI" id="CHEBI:46398"/>
        <dbReference type="ChEBI" id="CHEBI:456216"/>
    </reaction>
</comment>
<comment type="activity regulation">
    <text evidence="1">Allosterically activated by GTP, when glutamine is the substrate; GTP has no effect on the reaction when ammonia is the substrate. The allosteric effector GTP functions by stabilizing the protein conformation that binds the tetrahedral intermediate(s) formed during glutamine hydrolysis. Inhibited by the product CTP, via allosteric rather than competitive inhibition.</text>
</comment>
<comment type="pathway">
    <text evidence="1">Pyrimidine metabolism; CTP biosynthesis via de novo pathway; CTP from UDP: step 2/2.</text>
</comment>
<comment type="subunit">
    <text evidence="1">Homotetramer.</text>
</comment>
<comment type="miscellaneous">
    <text evidence="1">CTPSs have evolved a hybrid strategy for distinguishing between UTP and CTP. The overlapping regions of the product feedback inhibitory and substrate sites recognize a common feature in both compounds, the triphosphate moiety. To differentiate isosteric substrate and product pyrimidine rings, an additional pocket far from the expected kinase/ligase catalytic site, specifically recognizes the cytosine and ribose portions of the product inhibitor.</text>
</comment>
<comment type="similarity">
    <text evidence="1">Belongs to the CTP synthase family.</text>
</comment>
<accession>B4UIT6</accession>
<evidence type="ECO:0000255" key="1">
    <source>
        <dbReference type="HAMAP-Rule" id="MF_01227"/>
    </source>
</evidence>
<evidence type="ECO:0000256" key="2">
    <source>
        <dbReference type="SAM" id="MobiDB-lite"/>
    </source>
</evidence>
<protein>
    <recommendedName>
        <fullName evidence="1">CTP synthase</fullName>
        <ecNumber evidence="1">6.3.4.2</ecNumber>
    </recommendedName>
    <alternativeName>
        <fullName evidence="1">Cytidine 5'-triphosphate synthase</fullName>
    </alternativeName>
    <alternativeName>
        <fullName evidence="1">Cytidine triphosphate synthetase</fullName>
        <shortName evidence="1">CTP synthetase</shortName>
        <shortName evidence="1">CTPS</shortName>
    </alternativeName>
    <alternativeName>
        <fullName evidence="1">UTP--ammonia ligase</fullName>
    </alternativeName>
</protein>
<feature type="chain" id="PRO_1000139375" description="CTP synthase">
    <location>
        <begin position="1"/>
        <end position="555"/>
    </location>
</feature>
<feature type="domain" description="Glutamine amidotransferase type-1" evidence="1">
    <location>
        <begin position="297"/>
        <end position="537"/>
    </location>
</feature>
<feature type="region of interest" description="Amidoligase domain" evidence="1">
    <location>
        <begin position="1"/>
        <end position="271"/>
    </location>
</feature>
<feature type="region of interest" description="Disordered" evidence="2">
    <location>
        <begin position="535"/>
        <end position="555"/>
    </location>
</feature>
<feature type="active site" description="Nucleophile; for glutamine hydrolysis" evidence="1">
    <location>
        <position position="385"/>
    </location>
</feature>
<feature type="active site" evidence="1">
    <location>
        <position position="510"/>
    </location>
</feature>
<feature type="active site" evidence="1">
    <location>
        <position position="512"/>
    </location>
</feature>
<feature type="binding site" evidence="1">
    <location>
        <position position="19"/>
    </location>
    <ligand>
        <name>CTP</name>
        <dbReference type="ChEBI" id="CHEBI:37563"/>
        <note>allosteric inhibitor</note>
    </ligand>
</feature>
<feature type="binding site" evidence="1">
    <location>
        <position position="19"/>
    </location>
    <ligand>
        <name>UTP</name>
        <dbReference type="ChEBI" id="CHEBI:46398"/>
    </ligand>
</feature>
<feature type="binding site" evidence="1">
    <location>
        <begin position="20"/>
        <end position="25"/>
    </location>
    <ligand>
        <name>ATP</name>
        <dbReference type="ChEBI" id="CHEBI:30616"/>
    </ligand>
</feature>
<feature type="binding site" evidence="1">
    <location>
        <position position="77"/>
    </location>
    <ligand>
        <name>ATP</name>
        <dbReference type="ChEBI" id="CHEBI:30616"/>
    </ligand>
</feature>
<feature type="binding site" evidence="1">
    <location>
        <position position="77"/>
    </location>
    <ligand>
        <name>Mg(2+)</name>
        <dbReference type="ChEBI" id="CHEBI:18420"/>
    </ligand>
</feature>
<feature type="binding site" evidence="1">
    <location>
        <position position="145"/>
    </location>
    <ligand>
        <name>Mg(2+)</name>
        <dbReference type="ChEBI" id="CHEBI:18420"/>
    </ligand>
</feature>
<feature type="binding site" evidence="1">
    <location>
        <begin position="152"/>
        <end position="154"/>
    </location>
    <ligand>
        <name>CTP</name>
        <dbReference type="ChEBI" id="CHEBI:37563"/>
        <note>allosteric inhibitor</note>
    </ligand>
</feature>
<feature type="binding site" evidence="1">
    <location>
        <begin position="192"/>
        <end position="197"/>
    </location>
    <ligand>
        <name>CTP</name>
        <dbReference type="ChEBI" id="CHEBI:37563"/>
        <note>allosteric inhibitor</note>
    </ligand>
</feature>
<feature type="binding site" evidence="1">
    <location>
        <begin position="192"/>
        <end position="197"/>
    </location>
    <ligand>
        <name>UTP</name>
        <dbReference type="ChEBI" id="CHEBI:46398"/>
    </ligand>
</feature>
<feature type="binding site" evidence="1">
    <location>
        <position position="228"/>
    </location>
    <ligand>
        <name>CTP</name>
        <dbReference type="ChEBI" id="CHEBI:37563"/>
        <note>allosteric inhibitor</note>
    </ligand>
</feature>
<feature type="binding site" evidence="1">
    <location>
        <position position="228"/>
    </location>
    <ligand>
        <name>UTP</name>
        <dbReference type="ChEBI" id="CHEBI:46398"/>
    </ligand>
</feature>
<feature type="binding site" evidence="1">
    <location>
        <position position="358"/>
    </location>
    <ligand>
        <name>L-glutamine</name>
        <dbReference type="ChEBI" id="CHEBI:58359"/>
    </ligand>
</feature>
<feature type="binding site" evidence="1">
    <location>
        <begin position="386"/>
        <end position="389"/>
    </location>
    <ligand>
        <name>L-glutamine</name>
        <dbReference type="ChEBI" id="CHEBI:58359"/>
    </ligand>
</feature>
<feature type="binding site" evidence="1">
    <location>
        <position position="409"/>
    </location>
    <ligand>
        <name>L-glutamine</name>
        <dbReference type="ChEBI" id="CHEBI:58359"/>
    </ligand>
</feature>
<feature type="binding site" evidence="1">
    <location>
        <position position="466"/>
    </location>
    <ligand>
        <name>L-glutamine</name>
        <dbReference type="ChEBI" id="CHEBI:58359"/>
    </ligand>
</feature>
<sequence>MVKRGKKTKYLFVTGGVVSSLGKGLSAASIGALLENRGLEVQHLKLDPYINVDPGTMSPFQHGEVFVTDDGAETDLDLGHYERFTSAKMTRRNNYTTGRIYQNVIQRERRGEYLGKTVQVIPHITDEIKAVIREAAGGADILIVEVGGTVGDIESLPFLEAIRQMKYDVGEENAVYAHLTLVPFIAAAGELKTKPTQHSVKELREIGIQPDLLLCRSDRELPRDMKDKIALFCNVDPSAVFTALDVPSIYEVPLSLHREGLDDKLAELFNIWSRAPRLERWETIVDKVKNPRRGEVRIGIVGKYVELHESYKSLNEALVHGGIANDARVKLAFIDSTKLEEGDLSDLDKVDAILVPGGFGIRGTEGKILGVKYAREHKVPFFGICLGLQMAVIEMARNVLGLAGANSLEFDEATPHPVVTLMEGQKGVTDKGGTMRLGAYPCTLKEGTKARALYGAELVHERHRHRFEFNNDYRAQFEAAGMVFSGVNPDLGLVEMIELPGQHFVGCQFHPEFRSKPFAPHPLFAGFVKAALEHRDAQQRQPPAEVKKLAVGKNG</sequence>
<dbReference type="EC" id="6.3.4.2" evidence="1"/>
<dbReference type="EMBL" id="CP001131">
    <property type="protein sequence ID" value="ACG75508.1"/>
    <property type="molecule type" value="Genomic_DNA"/>
</dbReference>
<dbReference type="RefSeq" id="WP_012528260.1">
    <property type="nucleotide sequence ID" value="NC_011145.1"/>
</dbReference>
<dbReference type="SMR" id="B4UIT6"/>
<dbReference type="KEGG" id="ank:AnaeK_4305"/>
<dbReference type="HOGENOM" id="CLU_011675_5_0_7"/>
<dbReference type="OrthoDB" id="9801107at2"/>
<dbReference type="UniPathway" id="UPA00159">
    <property type="reaction ID" value="UER00277"/>
</dbReference>
<dbReference type="Proteomes" id="UP000001871">
    <property type="component" value="Chromosome"/>
</dbReference>
<dbReference type="GO" id="GO:0005829">
    <property type="term" value="C:cytosol"/>
    <property type="evidence" value="ECO:0007669"/>
    <property type="project" value="TreeGrafter"/>
</dbReference>
<dbReference type="GO" id="GO:0005524">
    <property type="term" value="F:ATP binding"/>
    <property type="evidence" value="ECO:0007669"/>
    <property type="project" value="UniProtKB-KW"/>
</dbReference>
<dbReference type="GO" id="GO:0003883">
    <property type="term" value="F:CTP synthase activity"/>
    <property type="evidence" value="ECO:0007669"/>
    <property type="project" value="UniProtKB-UniRule"/>
</dbReference>
<dbReference type="GO" id="GO:0004359">
    <property type="term" value="F:glutaminase activity"/>
    <property type="evidence" value="ECO:0007669"/>
    <property type="project" value="RHEA"/>
</dbReference>
<dbReference type="GO" id="GO:0042802">
    <property type="term" value="F:identical protein binding"/>
    <property type="evidence" value="ECO:0007669"/>
    <property type="project" value="TreeGrafter"/>
</dbReference>
<dbReference type="GO" id="GO:0046872">
    <property type="term" value="F:metal ion binding"/>
    <property type="evidence" value="ECO:0007669"/>
    <property type="project" value="UniProtKB-KW"/>
</dbReference>
<dbReference type="GO" id="GO:0044210">
    <property type="term" value="P:'de novo' CTP biosynthetic process"/>
    <property type="evidence" value="ECO:0007669"/>
    <property type="project" value="UniProtKB-UniRule"/>
</dbReference>
<dbReference type="GO" id="GO:0019856">
    <property type="term" value="P:pyrimidine nucleobase biosynthetic process"/>
    <property type="evidence" value="ECO:0007669"/>
    <property type="project" value="TreeGrafter"/>
</dbReference>
<dbReference type="CDD" id="cd03113">
    <property type="entry name" value="CTPS_N"/>
    <property type="match status" value="1"/>
</dbReference>
<dbReference type="CDD" id="cd01746">
    <property type="entry name" value="GATase1_CTP_Synthase"/>
    <property type="match status" value="1"/>
</dbReference>
<dbReference type="FunFam" id="3.40.50.300:FF:000009">
    <property type="entry name" value="CTP synthase"/>
    <property type="match status" value="1"/>
</dbReference>
<dbReference type="FunFam" id="3.40.50.880:FF:000002">
    <property type="entry name" value="CTP synthase"/>
    <property type="match status" value="1"/>
</dbReference>
<dbReference type="Gene3D" id="3.40.50.880">
    <property type="match status" value="1"/>
</dbReference>
<dbReference type="Gene3D" id="3.40.50.300">
    <property type="entry name" value="P-loop containing nucleotide triphosphate hydrolases"/>
    <property type="match status" value="1"/>
</dbReference>
<dbReference type="HAMAP" id="MF_01227">
    <property type="entry name" value="PyrG"/>
    <property type="match status" value="1"/>
</dbReference>
<dbReference type="InterPro" id="IPR029062">
    <property type="entry name" value="Class_I_gatase-like"/>
</dbReference>
<dbReference type="InterPro" id="IPR004468">
    <property type="entry name" value="CTP_synthase"/>
</dbReference>
<dbReference type="InterPro" id="IPR017456">
    <property type="entry name" value="CTP_synthase_N"/>
</dbReference>
<dbReference type="InterPro" id="IPR017926">
    <property type="entry name" value="GATASE"/>
</dbReference>
<dbReference type="InterPro" id="IPR033828">
    <property type="entry name" value="GATase1_CTP_Synthase"/>
</dbReference>
<dbReference type="InterPro" id="IPR027417">
    <property type="entry name" value="P-loop_NTPase"/>
</dbReference>
<dbReference type="NCBIfam" id="NF003792">
    <property type="entry name" value="PRK05380.1"/>
    <property type="match status" value="1"/>
</dbReference>
<dbReference type="NCBIfam" id="TIGR00337">
    <property type="entry name" value="PyrG"/>
    <property type="match status" value="1"/>
</dbReference>
<dbReference type="PANTHER" id="PTHR11550">
    <property type="entry name" value="CTP SYNTHASE"/>
    <property type="match status" value="1"/>
</dbReference>
<dbReference type="PANTHER" id="PTHR11550:SF0">
    <property type="entry name" value="CTP SYNTHASE-RELATED"/>
    <property type="match status" value="1"/>
</dbReference>
<dbReference type="Pfam" id="PF06418">
    <property type="entry name" value="CTP_synth_N"/>
    <property type="match status" value="1"/>
</dbReference>
<dbReference type="Pfam" id="PF00117">
    <property type="entry name" value="GATase"/>
    <property type="match status" value="1"/>
</dbReference>
<dbReference type="SUPFAM" id="SSF52317">
    <property type="entry name" value="Class I glutamine amidotransferase-like"/>
    <property type="match status" value="1"/>
</dbReference>
<dbReference type="SUPFAM" id="SSF52540">
    <property type="entry name" value="P-loop containing nucleoside triphosphate hydrolases"/>
    <property type="match status" value="1"/>
</dbReference>
<dbReference type="PROSITE" id="PS51273">
    <property type="entry name" value="GATASE_TYPE_1"/>
    <property type="match status" value="1"/>
</dbReference>
<proteinExistence type="inferred from homology"/>
<keyword id="KW-0067">ATP-binding</keyword>
<keyword id="KW-0315">Glutamine amidotransferase</keyword>
<keyword id="KW-0436">Ligase</keyword>
<keyword id="KW-0460">Magnesium</keyword>
<keyword id="KW-0479">Metal-binding</keyword>
<keyword id="KW-0547">Nucleotide-binding</keyword>
<keyword id="KW-0665">Pyrimidine biosynthesis</keyword>
<organism>
    <name type="scientific">Anaeromyxobacter sp. (strain K)</name>
    <dbReference type="NCBI Taxonomy" id="447217"/>
    <lineage>
        <taxon>Bacteria</taxon>
        <taxon>Pseudomonadati</taxon>
        <taxon>Myxococcota</taxon>
        <taxon>Myxococcia</taxon>
        <taxon>Myxococcales</taxon>
        <taxon>Cystobacterineae</taxon>
        <taxon>Anaeromyxobacteraceae</taxon>
        <taxon>Anaeromyxobacter</taxon>
    </lineage>
</organism>
<reference key="1">
    <citation type="submission" date="2008-08" db="EMBL/GenBank/DDBJ databases">
        <title>Complete sequence of Anaeromyxobacter sp. K.</title>
        <authorList>
            <consortium name="US DOE Joint Genome Institute"/>
            <person name="Lucas S."/>
            <person name="Copeland A."/>
            <person name="Lapidus A."/>
            <person name="Glavina del Rio T."/>
            <person name="Dalin E."/>
            <person name="Tice H."/>
            <person name="Bruce D."/>
            <person name="Goodwin L."/>
            <person name="Pitluck S."/>
            <person name="Saunders E."/>
            <person name="Brettin T."/>
            <person name="Detter J.C."/>
            <person name="Han C."/>
            <person name="Larimer F."/>
            <person name="Land M."/>
            <person name="Hauser L."/>
            <person name="Kyrpides N."/>
            <person name="Ovchinnikiva G."/>
            <person name="Beliaev A."/>
        </authorList>
    </citation>
    <scope>NUCLEOTIDE SEQUENCE [LARGE SCALE GENOMIC DNA]</scope>
    <source>
        <strain>K</strain>
    </source>
</reference>
<gene>
    <name evidence="1" type="primary">pyrG</name>
    <name type="ordered locus">AnaeK_4305</name>
</gene>